<sequence>MGLKKMKGLSYDEAFAMANDPLEGFHEVNLASPTSPDLLGVYESGTQEQTTSPSVIYRPHPSALSSVPIQANALDVSELPTQPVYSSPRRLNCAEISSISFHVTDPAPCSTSGVTAGLTKLTTRKDNYNAEREFLQGATITEACDGSDDIFGLSTDSLSRLRSPSVLEVREKGYERLKEELAKAQRELKLKDEECERLSKVRDQLGQELEELTASLFEEAHKMVREANIKQATAEKQLKEAQGKIDVLQAEVAALKTLVLSSSPTSPTQEPLPGGKTPFKKGHTRNKSTSSAMSGSHQDLSVIQPIVKDCKEADLSLYNEFRLWKDEPTMDRTCPFLDKIYQEDIFPCLTFSKSELASAVLEAVENNTLSIEPVGLQPIRFVKASAVECGGPKKCALTGQSKSCKHRIKLGDSSNYYYISPFCRYRITSVCNFFTYIRYIQQGLVKQQDVDQMFWEVMQLRKEMSLAKLGYFKEEL</sequence>
<reference evidence="18 23" key="1">
    <citation type="journal article" date="2002" name="Genes Chromosomes Cancer">
        <title>The cancer-related protein SSX2 interacts with the human homologue of a Ras-like GTPase interactor, RAB3IP, and a novel nuclear protein, SSX2IP.</title>
        <authorList>
            <person name="de Bruijn D.R.H."/>
            <person name="dos Santos N.R."/>
            <person name="Kater-Baats E."/>
            <person name="Thijssen J."/>
            <person name="van den Berk L."/>
            <person name="Stap J."/>
            <person name="Balemans M."/>
            <person name="Schepens M."/>
            <person name="Merkx G."/>
            <person name="van Kessel A.G."/>
        </authorList>
    </citation>
    <scope>NUCLEOTIDE SEQUENCE [MRNA] (ISOFORMS 1; 2; 3; 4; 5 AND 6)</scope>
    <scope>INTERACTION WITH SSX2</scope>
    <scope>SUBCELLULAR LOCATION</scope>
    <scope>TISSUE SPECIFICITY</scope>
    <source>
        <tissue evidence="4">Testis</tissue>
    </source>
</reference>
<reference key="2">
    <citation type="journal article" date="2002" name="Mol. Biol. Cell">
        <title>A Rab8-specific GDP/GTP exchange factor is involved in actin remodeling and polarized membrane transport.</title>
        <authorList>
            <person name="Hattula K."/>
            <person name="Furuhjelm J."/>
            <person name="Arffman A."/>
            <person name="Peranen J."/>
        </authorList>
    </citation>
    <scope>NUCLEOTIDE SEQUENCE [MRNA]</scope>
    <scope>FUNCTION</scope>
    <scope>INTERACTION WITH RAB3A; RAB8A AND RAB8B</scope>
    <scope>SUBCELLULAR LOCATION</scope>
    <scope>TISSUE SPECIFICITY</scope>
    <source>
        <tissue>Brain</tissue>
    </source>
</reference>
<reference evidence="18 21" key="3">
    <citation type="journal article" date="2004" name="Nat. Genet.">
        <title>Complete sequencing and characterization of 21,243 full-length human cDNAs.</title>
        <authorList>
            <person name="Ota T."/>
            <person name="Suzuki Y."/>
            <person name="Nishikawa T."/>
            <person name="Otsuki T."/>
            <person name="Sugiyama T."/>
            <person name="Irie R."/>
            <person name="Wakamatsu A."/>
            <person name="Hayashi K."/>
            <person name="Sato H."/>
            <person name="Nagai K."/>
            <person name="Kimura K."/>
            <person name="Makita H."/>
            <person name="Sekine M."/>
            <person name="Obayashi M."/>
            <person name="Nishi T."/>
            <person name="Shibahara T."/>
            <person name="Tanaka T."/>
            <person name="Ishii S."/>
            <person name="Yamamoto J."/>
            <person name="Saito K."/>
            <person name="Kawai Y."/>
            <person name="Isono Y."/>
            <person name="Nakamura Y."/>
            <person name="Nagahari K."/>
            <person name="Murakami K."/>
            <person name="Yasuda T."/>
            <person name="Iwayanagi T."/>
            <person name="Wagatsuma M."/>
            <person name="Shiratori A."/>
            <person name="Sudo H."/>
            <person name="Hosoiri T."/>
            <person name="Kaku Y."/>
            <person name="Kodaira H."/>
            <person name="Kondo H."/>
            <person name="Sugawara M."/>
            <person name="Takahashi M."/>
            <person name="Kanda K."/>
            <person name="Yokoi T."/>
            <person name="Furuya T."/>
            <person name="Kikkawa E."/>
            <person name="Omura Y."/>
            <person name="Abe K."/>
            <person name="Kamihara K."/>
            <person name="Katsuta N."/>
            <person name="Sato K."/>
            <person name="Tanikawa M."/>
            <person name="Yamazaki M."/>
            <person name="Ninomiya K."/>
            <person name="Ishibashi T."/>
            <person name="Yamashita H."/>
            <person name="Murakawa K."/>
            <person name="Fujimori K."/>
            <person name="Tanai H."/>
            <person name="Kimata M."/>
            <person name="Watanabe M."/>
            <person name="Hiraoka S."/>
            <person name="Chiba Y."/>
            <person name="Ishida S."/>
            <person name="Ono Y."/>
            <person name="Takiguchi S."/>
            <person name="Watanabe S."/>
            <person name="Yosida M."/>
            <person name="Hotuta T."/>
            <person name="Kusano J."/>
            <person name="Kanehori K."/>
            <person name="Takahashi-Fujii A."/>
            <person name="Hara H."/>
            <person name="Tanase T.-O."/>
            <person name="Nomura Y."/>
            <person name="Togiya S."/>
            <person name="Komai F."/>
            <person name="Hara R."/>
            <person name="Takeuchi K."/>
            <person name="Arita M."/>
            <person name="Imose N."/>
            <person name="Musashino K."/>
            <person name="Yuuki H."/>
            <person name="Oshima A."/>
            <person name="Sasaki N."/>
            <person name="Aotsuka S."/>
            <person name="Yoshikawa Y."/>
            <person name="Matsunawa H."/>
            <person name="Ichihara T."/>
            <person name="Shiohata N."/>
            <person name="Sano S."/>
            <person name="Moriya S."/>
            <person name="Momiyama H."/>
            <person name="Satoh N."/>
            <person name="Takami S."/>
            <person name="Terashima Y."/>
            <person name="Suzuki O."/>
            <person name="Nakagawa S."/>
            <person name="Senoh A."/>
            <person name="Mizoguchi H."/>
            <person name="Goto Y."/>
            <person name="Shimizu F."/>
            <person name="Wakebe H."/>
            <person name="Hishigaki H."/>
            <person name="Watanabe T."/>
            <person name="Sugiyama A."/>
            <person name="Takemoto M."/>
            <person name="Kawakami B."/>
            <person name="Yamazaki M."/>
            <person name="Watanabe K."/>
            <person name="Kumagai A."/>
            <person name="Itakura S."/>
            <person name="Fukuzumi Y."/>
            <person name="Fujimori Y."/>
            <person name="Komiyama M."/>
            <person name="Tashiro H."/>
            <person name="Tanigami A."/>
            <person name="Fujiwara T."/>
            <person name="Ono T."/>
            <person name="Yamada K."/>
            <person name="Fujii Y."/>
            <person name="Ozaki K."/>
            <person name="Hirao M."/>
            <person name="Ohmori Y."/>
            <person name="Kawabata A."/>
            <person name="Hikiji T."/>
            <person name="Kobatake N."/>
            <person name="Inagaki H."/>
            <person name="Ikema Y."/>
            <person name="Okamoto S."/>
            <person name="Okitani R."/>
            <person name="Kawakami T."/>
            <person name="Noguchi S."/>
            <person name="Itoh T."/>
            <person name="Shigeta K."/>
            <person name="Senba T."/>
            <person name="Matsumura K."/>
            <person name="Nakajima Y."/>
            <person name="Mizuno T."/>
            <person name="Morinaga M."/>
            <person name="Sasaki M."/>
            <person name="Togashi T."/>
            <person name="Oyama M."/>
            <person name="Hata H."/>
            <person name="Watanabe M."/>
            <person name="Komatsu T."/>
            <person name="Mizushima-Sugano J."/>
            <person name="Satoh T."/>
            <person name="Shirai Y."/>
            <person name="Takahashi Y."/>
            <person name="Nakagawa K."/>
            <person name="Okumura K."/>
            <person name="Nagase T."/>
            <person name="Nomura N."/>
            <person name="Kikuchi H."/>
            <person name="Masuho Y."/>
            <person name="Yamashita R."/>
            <person name="Nakai K."/>
            <person name="Yada T."/>
            <person name="Nakamura Y."/>
            <person name="Ohara O."/>
            <person name="Isogai T."/>
            <person name="Sugano S."/>
        </authorList>
    </citation>
    <scope>NUCLEOTIDE SEQUENCE [LARGE SCALE MRNA] (ISOFORMS 1 AND 8)</scope>
    <source>
        <tissue evidence="21">Small intestine</tissue>
        <tissue evidence="22">Teratocarcinoma</tissue>
    </source>
</reference>
<reference key="4">
    <citation type="journal article" date="2006" name="Nature">
        <title>The finished DNA sequence of human chromosome 12.</title>
        <authorList>
            <person name="Scherer S.E."/>
            <person name="Muzny D.M."/>
            <person name="Buhay C.J."/>
            <person name="Chen R."/>
            <person name="Cree A."/>
            <person name="Ding Y."/>
            <person name="Dugan-Rocha S."/>
            <person name="Gill R."/>
            <person name="Gunaratne P."/>
            <person name="Harris R.A."/>
            <person name="Hawes A.C."/>
            <person name="Hernandez J."/>
            <person name="Hodgson A.V."/>
            <person name="Hume J."/>
            <person name="Jackson A."/>
            <person name="Khan Z.M."/>
            <person name="Kovar-Smith C."/>
            <person name="Lewis L.R."/>
            <person name="Lozado R.J."/>
            <person name="Metzker M.L."/>
            <person name="Milosavljevic A."/>
            <person name="Miner G.R."/>
            <person name="Montgomery K.T."/>
            <person name="Morgan M.B."/>
            <person name="Nazareth L.V."/>
            <person name="Scott G."/>
            <person name="Sodergren E."/>
            <person name="Song X.-Z."/>
            <person name="Steffen D."/>
            <person name="Lovering R.C."/>
            <person name="Wheeler D.A."/>
            <person name="Worley K.C."/>
            <person name="Yuan Y."/>
            <person name="Zhang Z."/>
            <person name="Adams C.Q."/>
            <person name="Ansari-Lari M.A."/>
            <person name="Ayele M."/>
            <person name="Brown M.J."/>
            <person name="Chen G."/>
            <person name="Chen Z."/>
            <person name="Clerc-Blankenburg K.P."/>
            <person name="Davis C."/>
            <person name="Delgado O."/>
            <person name="Dinh H.H."/>
            <person name="Draper H."/>
            <person name="Gonzalez-Garay M.L."/>
            <person name="Havlak P."/>
            <person name="Jackson L.R."/>
            <person name="Jacob L.S."/>
            <person name="Kelly S.H."/>
            <person name="Li L."/>
            <person name="Li Z."/>
            <person name="Liu J."/>
            <person name="Liu W."/>
            <person name="Lu J."/>
            <person name="Maheshwari M."/>
            <person name="Nguyen B.-V."/>
            <person name="Okwuonu G.O."/>
            <person name="Pasternak S."/>
            <person name="Perez L.M."/>
            <person name="Plopper F.J.H."/>
            <person name="Santibanez J."/>
            <person name="Shen H."/>
            <person name="Tabor P.E."/>
            <person name="Verduzco D."/>
            <person name="Waldron L."/>
            <person name="Wang Q."/>
            <person name="Williams G.A."/>
            <person name="Zhang J."/>
            <person name="Zhou J."/>
            <person name="Allen C.C."/>
            <person name="Amin A.G."/>
            <person name="Anyalebechi V."/>
            <person name="Bailey M."/>
            <person name="Barbaria J.A."/>
            <person name="Bimage K.E."/>
            <person name="Bryant N.P."/>
            <person name="Burch P.E."/>
            <person name="Burkett C.E."/>
            <person name="Burrell K.L."/>
            <person name="Calderon E."/>
            <person name="Cardenas V."/>
            <person name="Carter K."/>
            <person name="Casias K."/>
            <person name="Cavazos I."/>
            <person name="Cavazos S.R."/>
            <person name="Ceasar H."/>
            <person name="Chacko J."/>
            <person name="Chan S.N."/>
            <person name="Chavez D."/>
            <person name="Christopoulos C."/>
            <person name="Chu J."/>
            <person name="Cockrell R."/>
            <person name="Cox C.D."/>
            <person name="Dang M."/>
            <person name="Dathorne S.R."/>
            <person name="David R."/>
            <person name="Davis C.M."/>
            <person name="Davy-Carroll L."/>
            <person name="Deshazo D.R."/>
            <person name="Donlin J.E."/>
            <person name="D'Souza L."/>
            <person name="Eaves K.A."/>
            <person name="Egan A."/>
            <person name="Emery-Cohen A.J."/>
            <person name="Escotto M."/>
            <person name="Flagg N."/>
            <person name="Forbes L.D."/>
            <person name="Gabisi A.M."/>
            <person name="Garza M."/>
            <person name="Hamilton C."/>
            <person name="Henderson N."/>
            <person name="Hernandez O."/>
            <person name="Hines S."/>
            <person name="Hogues M.E."/>
            <person name="Huang M."/>
            <person name="Idlebird D.G."/>
            <person name="Johnson R."/>
            <person name="Jolivet A."/>
            <person name="Jones S."/>
            <person name="Kagan R."/>
            <person name="King L.M."/>
            <person name="Leal B."/>
            <person name="Lebow H."/>
            <person name="Lee S."/>
            <person name="LeVan J.M."/>
            <person name="Lewis L.C."/>
            <person name="London P."/>
            <person name="Lorensuhewa L.M."/>
            <person name="Loulseged H."/>
            <person name="Lovett D.A."/>
            <person name="Lucier A."/>
            <person name="Lucier R.L."/>
            <person name="Ma J."/>
            <person name="Madu R.C."/>
            <person name="Mapua P."/>
            <person name="Martindale A.D."/>
            <person name="Martinez E."/>
            <person name="Massey E."/>
            <person name="Mawhiney S."/>
            <person name="Meador M.G."/>
            <person name="Mendez S."/>
            <person name="Mercado C."/>
            <person name="Mercado I.C."/>
            <person name="Merritt C.E."/>
            <person name="Miner Z.L."/>
            <person name="Minja E."/>
            <person name="Mitchell T."/>
            <person name="Mohabbat F."/>
            <person name="Mohabbat K."/>
            <person name="Montgomery B."/>
            <person name="Moore N."/>
            <person name="Morris S."/>
            <person name="Munidasa M."/>
            <person name="Ngo R.N."/>
            <person name="Nguyen N.B."/>
            <person name="Nickerson E."/>
            <person name="Nwaokelemeh O.O."/>
            <person name="Nwokenkwo S."/>
            <person name="Obregon M."/>
            <person name="Oguh M."/>
            <person name="Oragunye N."/>
            <person name="Oviedo R.J."/>
            <person name="Parish B.J."/>
            <person name="Parker D.N."/>
            <person name="Parrish J."/>
            <person name="Parks K.L."/>
            <person name="Paul H.A."/>
            <person name="Payton B.A."/>
            <person name="Perez A."/>
            <person name="Perrin W."/>
            <person name="Pickens A."/>
            <person name="Primus E.L."/>
            <person name="Pu L.-L."/>
            <person name="Puazo M."/>
            <person name="Quiles M.M."/>
            <person name="Quiroz J.B."/>
            <person name="Rabata D."/>
            <person name="Reeves K."/>
            <person name="Ruiz S.J."/>
            <person name="Shao H."/>
            <person name="Sisson I."/>
            <person name="Sonaike T."/>
            <person name="Sorelle R.P."/>
            <person name="Sutton A.E."/>
            <person name="Svatek A.F."/>
            <person name="Svetz L.A."/>
            <person name="Tamerisa K.S."/>
            <person name="Taylor T.R."/>
            <person name="Teague B."/>
            <person name="Thomas N."/>
            <person name="Thorn R.D."/>
            <person name="Trejos Z.Y."/>
            <person name="Trevino B.K."/>
            <person name="Ukegbu O.N."/>
            <person name="Urban J.B."/>
            <person name="Vasquez L.I."/>
            <person name="Vera V.A."/>
            <person name="Villasana D.M."/>
            <person name="Wang L."/>
            <person name="Ward-Moore S."/>
            <person name="Warren J.T."/>
            <person name="Wei X."/>
            <person name="White F."/>
            <person name="Williamson A.L."/>
            <person name="Wleczyk R."/>
            <person name="Wooden H.S."/>
            <person name="Wooden S.H."/>
            <person name="Yen J."/>
            <person name="Yoon L."/>
            <person name="Yoon V."/>
            <person name="Zorrilla S.E."/>
            <person name="Nelson D."/>
            <person name="Kucherlapati R."/>
            <person name="Weinstock G."/>
            <person name="Gibbs R.A."/>
        </authorList>
    </citation>
    <scope>NUCLEOTIDE SEQUENCE [LARGE SCALE GENOMIC DNA]</scope>
</reference>
<reference evidence="18 20" key="5">
    <citation type="journal article" date="2004" name="Genome Res.">
        <title>The status, quality, and expansion of the NIH full-length cDNA project: the Mammalian Gene Collection (MGC).</title>
        <authorList>
            <consortium name="The MGC Project Team"/>
        </authorList>
    </citation>
    <scope>NUCLEOTIDE SEQUENCE [LARGE SCALE MRNA] (ISOFORMS 7 AND 8)</scope>
    <source>
        <tissue evidence="20">Brain</tissue>
        <tissue evidence="19">Colon</tissue>
    </source>
</reference>
<reference key="6">
    <citation type="journal article" date="2008" name="J. Proteome Res.">
        <title>Combining protein-based IMAC, peptide-based IMAC, and MudPIT for efficient phosphoproteomic analysis.</title>
        <authorList>
            <person name="Cantin G.T."/>
            <person name="Yi W."/>
            <person name="Lu B."/>
            <person name="Park S.K."/>
            <person name="Xu T."/>
            <person name="Lee J.-D."/>
            <person name="Yates J.R. III"/>
        </authorList>
    </citation>
    <scope>IDENTIFICATION BY MASS SPECTROMETRY [LARGE SCALE ANALYSIS]</scope>
    <source>
        <tissue>Cervix carcinoma</tissue>
    </source>
</reference>
<reference key="7">
    <citation type="journal article" date="2008" name="Proc. Natl. Acad. Sci. U.S.A.">
        <title>A quantitative atlas of mitotic phosphorylation.</title>
        <authorList>
            <person name="Dephoure N."/>
            <person name="Zhou C."/>
            <person name="Villen J."/>
            <person name="Beausoleil S.A."/>
            <person name="Bakalarski C.E."/>
            <person name="Elledge S.J."/>
            <person name="Gygi S.P."/>
        </authorList>
    </citation>
    <scope>PHOSPHORYLATION [LARGE SCALE ANALYSIS] AT SER-163</scope>
    <scope>IDENTIFICATION BY MASS SPECTROMETRY [LARGE SCALE ANALYSIS]</scope>
    <source>
        <tissue>Cervix carcinoma</tissue>
    </source>
</reference>
<reference key="8">
    <citation type="journal article" date="2009" name="Anal. Chem.">
        <title>Lys-N and trypsin cover complementary parts of the phosphoproteome in a refined SCX-based approach.</title>
        <authorList>
            <person name="Gauci S."/>
            <person name="Helbig A.O."/>
            <person name="Slijper M."/>
            <person name="Krijgsveld J."/>
            <person name="Heck A.J."/>
            <person name="Mohammed S."/>
        </authorList>
    </citation>
    <scope>IDENTIFICATION BY MASS SPECTROMETRY [LARGE SCALE ANALYSIS]</scope>
</reference>
<reference key="9">
    <citation type="journal article" date="2009" name="Sci. Signal.">
        <title>Quantitative phosphoproteomic analysis of T cell receptor signaling reveals system-wide modulation of protein-protein interactions.</title>
        <authorList>
            <person name="Mayya V."/>
            <person name="Lundgren D.H."/>
            <person name="Hwang S.-I."/>
            <person name="Rezaul K."/>
            <person name="Wu L."/>
            <person name="Eng J.K."/>
            <person name="Rodionov V."/>
            <person name="Han D.K."/>
        </authorList>
    </citation>
    <scope>IDENTIFICATION BY MASS SPECTROMETRY [LARGE SCALE ANALYSIS]</scope>
    <source>
        <tissue>Leukemic T-cell</tissue>
    </source>
</reference>
<reference key="10">
    <citation type="journal article" date="2010" name="J. Cell Biol.">
        <title>Family-wide characterization of the DENN domain Rab GDP-GTP exchange factors.</title>
        <authorList>
            <person name="Yoshimura S."/>
            <person name="Gerondopoulos A."/>
            <person name="Linford A."/>
            <person name="Rigden D.J."/>
            <person name="Barr F.A."/>
        </authorList>
    </citation>
    <scope>FUNCTION AS GUANYL-NUCLEOTIDE EXCHANGE FACTOR</scope>
</reference>
<reference key="11">
    <citation type="journal article" date="2010" name="Nat. Cell Biol.">
        <title>A molecular network for de novo generation of the apical surface and lumen.</title>
        <authorList>
            <person name="Bryant D.M."/>
            <person name="Datta A."/>
            <person name="Rodriguez-Fraticelli A.E."/>
            <person name="Peraenen J."/>
            <person name="Martin-Belmonte F."/>
            <person name="Mostov K.E."/>
        </authorList>
    </citation>
    <scope>FUNCTION</scope>
</reference>
<reference key="12">
    <citation type="journal article" date="2010" name="Sci. Signal.">
        <title>Quantitative phosphoproteomics reveals widespread full phosphorylation site occupancy during mitosis.</title>
        <authorList>
            <person name="Olsen J.V."/>
            <person name="Vermeulen M."/>
            <person name="Santamaria A."/>
            <person name="Kumar C."/>
            <person name="Miller M.L."/>
            <person name="Jensen L.J."/>
            <person name="Gnad F."/>
            <person name="Cox J."/>
            <person name="Jensen T.S."/>
            <person name="Nigg E.A."/>
            <person name="Brunak S."/>
            <person name="Mann M."/>
        </authorList>
    </citation>
    <scope>IDENTIFICATION BY MASS SPECTROMETRY [LARGE SCALE ANALYSIS]</scope>
    <source>
        <tissue>Cervix carcinoma</tissue>
    </source>
</reference>
<reference key="13">
    <citation type="journal article" date="2011" name="J. Cell Sci.">
        <title>Linking cytoplasmic dynein and transport of Rab8 vesicles to the midbody during cytokinesis by the doublecortin domain-containing 5 protein.</title>
        <authorList>
            <person name="Kaplan A."/>
            <person name="Reiner O."/>
        </authorList>
    </citation>
    <scope>INTERACTION WITH DCDC1</scope>
</reference>
<reference key="14">
    <citation type="journal article" date="2013" name="J. Proteome Res.">
        <title>Toward a comprehensive characterization of a human cancer cell phosphoproteome.</title>
        <authorList>
            <person name="Zhou H."/>
            <person name="Di Palma S."/>
            <person name="Preisinger C."/>
            <person name="Peng M."/>
            <person name="Polat A.N."/>
            <person name="Heck A.J."/>
            <person name="Mohammed S."/>
        </authorList>
    </citation>
    <scope>PHOSPHORYLATION [LARGE SCALE ANALYSIS] AT SER-163; SER-266 AND SER-288</scope>
    <scope>IDENTIFICATION BY MASS SPECTROMETRY [LARGE SCALE ANALYSIS]</scope>
    <source>
        <tissue>Cervix carcinoma</tissue>
        <tissue>Erythroleukemia</tissue>
    </source>
</reference>
<reference key="15">
    <citation type="journal article" date="2014" name="J. Proteomics">
        <title>An enzyme assisted RP-RPLC approach for in-depth analysis of human liver phosphoproteome.</title>
        <authorList>
            <person name="Bian Y."/>
            <person name="Song C."/>
            <person name="Cheng K."/>
            <person name="Dong M."/>
            <person name="Wang F."/>
            <person name="Huang J."/>
            <person name="Sun D."/>
            <person name="Wang L."/>
            <person name="Ye M."/>
            <person name="Zou H."/>
        </authorList>
    </citation>
    <scope>IDENTIFICATION BY MASS SPECTROMETRY [LARGE SCALE ANALYSIS]</scope>
    <source>
        <tissue>Liver</tissue>
    </source>
</reference>
<reference key="16">
    <citation type="journal article" date="2015" name="J. Cell Sci.">
        <title>The Arf and Rab11 effector FIP3 acts synergistically with ASAP1 to direct Rabin8 in ciliary receptor targeting.</title>
        <authorList>
            <person name="Wang J."/>
            <person name="Deretic D."/>
        </authorList>
    </citation>
    <scope>FUNCTION</scope>
    <scope>INTERACTION WITH RAB11A; ASAP1; RAB11FIP3; ARF4 AND RHO</scope>
</reference>
<reference key="17">
    <citation type="journal article" date="2016" name="Elife">
        <title>Phosphoproteomics reveals that Parkinson's disease kinase LRRK2 regulates a subset of Rab GTPases.</title>
        <authorList>
            <person name="Steger M."/>
            <person name="Tonelli F."/>
            <person name="Ito G."/>
            <person name="Davies P."/>
            <person name="Trost M."/>
            <person name="Vetter M."/>
            <person name="Wachter S."/>
            <person name="Lorentzen E."/>
            <person name="Duddy G."/>
            <person name="Wilson S."/>
            <person name="Baptista M.A."/>
            <person name="Fiske B.K."/>
            <person name="Fell M.J."/>
            <person name="Morrow J.A."/>
            <person name="Reith A.D."/>
            <person name="Alessi D.R."/>
            <person name="Mann M."/>
        </authorList>
    </citation>
    <scope>IDENTIFICATION BY MASS SPECTROMETRY</scope>
    <scope>FUNCTION</scope>
    <scope>INTERACTION WITH RAB8A</scope>
</reference>
<reference key="18">
    <citation type="journal article" date="2019" name="Dev. Cell">
        <title>Akt Regulates a Rab11-Effector Switch Required for Ciliogenesis.</title>
        <authorList>
            <person name="Walia V."/>
            <person name="Cuenca A."/>
            <person name="Vetter M."/>
            <person name="Insinna C."/>
            <person name="Perera S."/>
            <person name="Lu Q."/>
            <person name="Ritt D.A."/>
            <person name="Semler E."/>
            <person name="Specht S."/>
            <person name="Stauffer J."/>
            <person name="Morrison D.K."/>
            <person name="Lorentzen E."/>
            <person name="Westlake C.J."/>
        </authorList>
    </citation>
    <scope>FUNCTION</scope>
    <scope>INTERACTION WITH RAB11A AND RAB11FIP3</scope>
    <scope>PHOSPHORYLATION AT SER-163 AND SER-165</scope>
    <scope>ACTIVITY REGULATION</scope>
</reference>
<reference key="19">
    <citation type="journal article" date="2019" name="J. Biol. Chem.">
        <title>The C7orf43/TRAPPC14 component links the TRAPPII complex to Rabin8 for preciliary vesicle tethering at the mother centriole during ciliogenesis.</title>
        <authorList>
            <person name="Cuenca A."/>
            <person name="Insinna C."/>
            <person name="Zhao H."/>
            <person name="John P."/>
            <person name="Weiss M.A."/>
            <person name="Lu Q."/>
            <person name="Walia V."/>
            <person name="Specht S."/>
            <person name="Manivannan S."/>
            <person name="Stauffer J."/>
            <person name="Peden A.A."/>
            <person name="Westlake C.J."/>
        </authorList>
    </citation>
    <scope>INTERACTION WITH TRAPPC14</scope>
    <scope>SUBCELLULAR LOCATION</scope>
</reference>
<reference evidence="24 25 26" key="20">
    <citation type="journal article" date="2015" name="Nat. Struct. Mol. Biol.">
        <title>Structure of Rab11-FIP3-Rabin8 reveals simultaneous binding of FIP3 and Rabin8 effectors to Rab11.</title>
        <authorList>
            <person name="Vetter M."/>
            <person name="Stehle R."/>
            <person name="Basquin C."/>
            <person name="Lorentzen E."/>
        </authorList>
    </citation>
    <scope>X-RAY CRYSTALLOGRAPHY (2.60 ANGSTROMS) OF 286-476</scope>
    <scope>HOMODIMER</scope>
    <scope>IN COMPLEX WITH RAB11FIP3 AND RAB3IP</scope>
    <scope>MUTAGENESIS OF THR-435; TYR-439 AND LEU-444</scope>
</reference>
<name>RAB3I_HUMAN</name>
<feature type="chain" id="PRO_0000097144" description="Rab-3A-interacting protein">
    <location>
        <begin position="1"/>
        <end position="476"/>
    </location>
</feature>
<feature type="region of interest" description="Disordered" evidence="3">
    <location>
        <begin position="262"/>
        <end position="297"/>
    </location>
</feature>
<feature type="region of interest" description="Important for RAB11A binding" evidence="10">
    <location>
        <begin position="435"/>
        <end position="444"/>
    </location>
</feature>
<feature type="coiled-coil region" evidence="2">
    <location>
        <begin position="165"/>
        <end position="260"/>
    </location>
</feature>
<feature type="compositionally biased region" description="Polar residues" evidence="3">
    <location>
        <begin position="287"/>
        <end position="297"/>
    </location>
</feature>
<feature type="modified residue" description="Phosphoserine; by PKB/AKT1" evidence="12 27 28">
    <location>
        <position position="163"/>
    </location>
</feature>
<feature type="modified residue" description="Phosphoserine; by PKB/AKT1" evidence="12">
    <location>
        <position position="165"/>
    </location>
</feature>
<feature type="modified residue" description="Phosphoserine" evidence="1">
    <location>
        <position position="263"/>
    </location>
</feature>
<feature type="modified residue" description="Phosphoserine" evidence="28">
    <location>
        <position position="266"/>
    </location>
</feature>
<feature type="modified residue" description="Phosphoserine" evidence="28">
    <location>
        <position position="288"/>
    </location>
</feature>
<feature type="modified residue" description="Phosphoserine" evidence="1">
    <location>
        <position position="296"/>
    </location>
</feature>
<feature type="splice variant" id="VSP_051756" description="In isoform 8." evidence="15 16">
    <location>
        <begin position="1"/>
        <end position="222"/>
    </location>
</feature>
<feature type="splice variant" id="VSP_051755" description="In isoform 1, isoform 3, isoform 5 and isoform 7." evidence="14 15 16">
    <location>
        <begin position="1"/>
        <end position="16"/>
    </location>
</feature>
<feature type="splice variant" id="VSP_051758" description="In isoform 7." evidence="16">
    <original>ADLSLYNEFRLWKDEPTMD</original>
    <variation>VTHQGLSPLTLLILVSSHH</variation>
    <location>
        <begin position="313"/>
        <end position="331"/>
    </location>
</feature>
<feature type="splice variant" id="VSP_051757" description="In isoform 5 and isoform 6." evidence="14">
    <original>ADLSLYNE</original>
    <variation>KMCSHWPE</variation>
    <location>
        <begin position="313"/>
        <end position="320"/>
    </location>
</feature>
<feature type="splice variant" id="VSP_051759" description="In isoform 5 and isoform 6." evidence="14">
    <location>
        <begin position="321"/>
        <end position="476"/>
    </location>
</feature>
<feature type="splice variant" id="VSP_051760" description="In isoform 7." evidence="16">
    <location>
        <begin position="332"/>
        <end position="476"/>
    </location>
</feature>
<feature type="splice variant" id="VSP_051761" description="In isoform 3 and isoform 4." evidence="14">
    <original>KCALTGQSKSCKHRIKLG</original>
    <variation>SLLYVTFLHTFDTFSRDS</variation>
    <location>
        <begin position="394"/>
        <end position="411"/>
    </location>
</feature>
<feature type="splice variant" id="VSP_051762" description="In isoform 3 and isoform 4." evidence="14">
    <location>
        <begin position="412"/>
        <end position="476"/>
    </location>
</feature>
<feature type="mutagenesis site" description="Reduced complex formation with RAB11A; when associated with A-439 and A-444." evidence="10">
    <original>T</original>
    <variation>A</variation>
    <location>
        <position position="435"/>
    </location>
</feature>
<feature type="mutagenesis site" description="Reduced complex formation with RAB11A; when associated with A-435 and A-444." evidence="10">
    <original>Y</original>
    <variation>A</variation>
    <location>
        <position position="439"/>
    </location>
</feature>
<feature type="mutagenesis site" description="Reduced complex formation with RAB11A; when associated with A-435 and A-439." evidence="10">
    <original>L</original>
    <variation>A</variation>
    <location>
        <position position="444"/>
    </location>
</feature>
<feature type="sequence conflict" description="In Ref. 5; AAH59358." evidence="18" ref="5">
    <original>P</original>
    <variation>Q</variation>
    <location>
        <position position="164"/>
    </location>
</feature>
<feature type="sequence conflict" description="In Ref. 3; BAB15391." evidence="18" ref="3">
    <original>N</original>
    <variation>D</variation>
    <location>
        <position position="286"/>
    </location>
</feature>
<feature type="sequence conflict" description="In Ref. 3; BAB15391." evidence="18" ref="3">
    <location>
        <position position="356"/>
    </location>
</feature>
<feature type="sequence conflict" description="In Ref. 3; BAB15391." evidence="18" ref="3">
    <original>M</original>
    <variation>V</variation>
    <location>
        <position position="464"/>
    </location>
</feature>
<feature type="helix" evidence="31">
    <location>
        <begin position="165"/>
        <end position="260"/>
    </location>
</feature>
<feature type="strand" evidence="29">
    <location>
        <begin position="309"/>
        <end position="311"/>
    </location>
</feature>
<feature type="helix" evidence="30">
    <location>
        <begin position="315"/>
        <end position="325"/>
    </location>
</feature>
<feature type="helix" evidence="30">
    <location>
        <begin position="335"/>
        <end position="343"/>
    </location>
</feature>
<feature type="helix" evidence="30">
    <location>
        <begin position="345"/>
        <end position="348"/>
    </location>
</feature>
<feature type="helix" evidence="30">
    <location>
        <begin position="354"/>
        <end position="365"/>
    </location>
</feature>
<feature type="strand" evidence="30">
    <location>
        <begin position="370"/>
        <end position="373"/>
    </location>
</feature>
<feature type="turn" evidence="29">
    <location>
        <begin position="386"/>
        <end position="388"/>
    </location>
</feature>
<feature type="turn" evidence="30">
    <location>
        <begin position="396"/>
        <end position="398"/>
    </location>
</feature>
<feature type="strand" evidence="30">
    <location>
        <begin position="406"/>
        <end position="414"/>
    </location>
</feature>
<feature type="strand" evidence="30">
    <location>
        <begin position="416"/>
        <end position="419"/>
    </location>
</feature>
<feature type="helix" evidence="30">
    <location>
        <begin position="421"/>
        <end position="441"/>
    </location>
</feature>
<feature type="turn" evidence="30">
    <location>
        <begin position="442"/>
        <end position="444"/>
    </location>
</feature>
<feature type="helix" evidence="30">
    <location>
        <begin position="450"/>
        <end position="468"/>
    </location>
</feature>
<keyword id="KW-0002">3D-structure</keyword>
<keyword id="KW-0025">Alternative splicing</keyword>
<keyword id="KW-0966">Cell projection</keyword>
<keyword id="KW-0175">Coiled coil</keyword>
<keyword id="KW-0963">Cytoplasm</keyword>
<keyword id="KW-0206">Cytoskeleton</keyword>
<keyword id="KW-0344">Guanine-nucleotide releasing factor</keyword>
<keyword id="KW-0539">Nucleus</keyword>
<keyword id="KW-0597">Phosphoprotein</keyword>
<keyword id="KW-0653">Protein transport</keyword>
<keyword id="KW-1267">Proteomics identification</keyword>
<keyword id="KW-1185">Reference proteome</keyword>
<keyword id="KW-0813">Transport</keyword>
<organism>
    <name type="scientific">Homo sapiens</name>
    <name type="common">Human</name>
    <dbReference type="NCBI Taxonomy" id="9606"/>
    <lineage>
        <taxon>Eukaryota</taxon>
        <taxon>Metazoa</taxon>
        <taxon>Chordata</taxon>
        <taxon>Craniata</taxon>
        <taxon>Vertebrata</taxon>
        <taxon>Euteleostomi</taxon>
        <taxon>Mammalia</taxon>
        <taxon>Eutheria</taxon>
        <taxon>Euarchontoglires</taxon>
        <taxon>Primates</taxon>
        <taxon>Haplorrhini</taxon>
        <taxon>Catarrhini</taxon>
        <taxon>Hominidae</taxon>
        <taxon>Homo</taxon>
    </lineage>
</organism>
<accession>Q96QF0</accession>
<accession>B7WPJ6</accession>
<accession>Q6PCE4</accession>
<accession>Q96A24</accession>
<accession>Q96QE6</accession>
<accession>Q96QE7</accession>
<accession>Q96QE8</accession>
<accession>Q96QE9</accession>
<accession>Q96QF1</accession>
<accession>Q9H673</accession>
<protein>
    <recommendedName>
        <fullName>Rab-3A-interacting protein</fullName>
        <shortName>Rab3A-interacting protein</shortName>
    </recommendedName>
    <alternativeName>
        <fullName>Rabin-3</fullName>
    </alternativeName>
    <alternativeName>
        <fullName evidence="17">Rabin8</fullName>
    </alternativeName>
    <alternativeName>
        <fullName>SSX2-interacting protein</fullName>
    </alternativeName>
</protein>
<proteinExistence type="evidence at protein level"/>
<dbReference type="EMBL" id="AJ312896">
    <property type="protein sequence ID" value="CAC59835.1"/>
    <property type="molecule type" value="mRNA"/>
</dbReference>
<dbReference type="EMBL" id="AJ312897">
    <property type="protein sequence ID" value="CAC59836.1"/>
    <property type="molecule type" value="mRNA"/>
</dbReference>
<dbReference type="EMBL" id="AJ312898">
    <property type="protein sequence ID" value="CAC59837.1"/>
    <property type="molecule type" value="mRNA"/>
</dbReference>
<dbReference type="EMBL" id="AJ312899">
    <property type="protein sequence ID" value="CAC59838.1"/>
    <property type="molecule type" value="mRNA"/>
</dbReference>
<dbReference type="EMBL" id="AJ312900">
    <property type="protein sequence ID" value="CAC59839.1"/>
    <property type="molecule type" value="mRNA"/>
</dbReference>
<dbReference type="EMBL" id="AJ312901">
    <property type="protein sequence ID" value="CAC59840.1"/>
    <property type="molecule type" value="mRNA"/>
</dbReference>
<dbReference type="EMBL" id="AK026201">
    <property type="protein sequence ID" value="BAB15391.1"/>
    <property type="molecule type" value="mRNA"/>
</dbReference>
<dbReference type="EMBL" id="AK027566">
    <property type="protein sequence ID" value="BAB55202.1"/>
    <property type="molecule type" value="mRNA"/>
</dbReference>
<dbReference type="EMBL" id="AK027671">
    <property type="protein sequence ID" value="BAB55283.1"/>
    <property type="molecule type" value="mRNA"/>
</dbReference>
<dbReference type="EMBL" id="AC025263">
    <property type="status" value="NOT_ANNOTATED_CDS"/>
    <property type="molecule type" value="Genomic_DNA"/>
</dbReference>
<dbReference type="EMBL" id="BC015548">
    <property type="protein sequence ID" value="AAH15548.1"/>
    <property type="molecule type" value="mRNA"/>
</dbReference>
<dbReference type="EMBL" id="BC059358">
    <property type="protein sequence ID" value="AAH59358.1"/>
    <property type="molecule type" value="mRNA"/>
</dbReference>
<dbReference type="CCDS" id="CCDS41811.1">
    <molecule id="Q96QF0-4"/>
</dbReference>
<dbReference type="CCDS" id="CCDS44942.1">
    <molecule id="Q96QF0-8"/>
</dbReference>
<dbReference type="CCDS" id="CCDS8993.1">
    <molecule id="Q96QF0-1"/>
</dbReference>
<dbReference type="CCDS" id="CCDS8995.1">
    <molecule id="Q96QF0-2"/>
</dbReference>
<dbReference type="CCDS" id="CCDS8996.1">
    <molecule id="Q96QF0-3"/>
</dbReference>
<dbReference type="RefSeq" id="NP_001019818.1">
    <molecule id="Q96QF0-8"/>
    <property type="nucleotide sequence ID" value="NM_001024647.3"/>
</dbReference>
<dbReference type="RefSeq" id="NP_001265331.1">
    <molecule id="Q96QF0-8"/>
    <property type="nucleotide sequence ID" value="NM_001278402.1"/>
</dbReference>
<dbReference type="RefSeq" id="NP_071901.2">
    <molecule id="Q96QF0-2"/>
    <property type="nucleotide sequence ID" value="NM_022456.4"/>
</dbReference>
<dbReference type="RefSeq" id="NP_783322.1">
    <molecule id="Q96QF0-1"/>
    <property type="nucleotide sequence ID" value="NM_175623.4"/>
</dbReference>
<dbReference type="RefSeq" id="NP_783323.1">
    <molecule id="Q96QF0-3"/>
    <property type="nucleotide sequence ID" value="NM_175624.4"/>
</dbReference>
<dbReference type="RefSeq" id="NP_783324.1">
    <molecule id="Q96QF0-4"/>
    <property type="nucleotide sequence ID" value="NM_175625.4"/>
</dbReference>
<dbReference type="RefSeq" id="XP_016874262.1">
    <property type="nucleotide sequence ID" value="XM_017018773.1"/>
</dbReference>
<dbReference type="RefSeq" id="XP_016874265.1">
    <property type="nucleotide sequence ID" value="XM_017018776.1"/>
</dbReference>
<dbReference type="RefSeq" id="XP_016874266.1">
    <property type="nucleotide sequence ID" value="XM_017018777.1"/>
</dbReference>
<dbReference type="RefSeq" id="XP_054227014.1">
    <molecule id="Q96QF0-8"/>
    <property type="nucleotide sequence ID" value="XM_054371039.1"/>
</dbReference>
<dbReference type="PDB" id="4LHX">
    <property type="method" value="X-ray"/>
    <property type="resolution" value="3.05 A"/>
    <property type="chains" value="C/D/E/F=173-248"/>
</dbReference>
<dbReference type="PDB" id="4LHY">
    <property type="method" value="X-ray"/>
    <property type="resolution" value="3.10 A"/>
    <property type="chains" value="C/D/E/F=173-248"/>
</dbReference>
<dbReference type="PDB" id="4LHZ">
    <property type="method" value="X-ray"/>
    <property type="resolution" value="3.20 A"/>
    <property type="chains" value="C/D/E/F=173-248"/>
</dbReference>
<dbReference type="PDB" id="4UJ3">
    <property type="method" value="X-ray"/>
    <property type="resolution" value="3.00 A"/>
    <property type="chains" value="B/E/H/K/N/Q/T/W=286-476"/>
</dbReference>
<dbReference type="PDB" id="4UJ4">
    <property type="method" value="X-ray"/>
    <property type="resolution" value="4.20 A"/>
    <property type="chains" value="B/E/H/K=286-476"/>
</dbReference>
<dbReference type="PDB" id="4UJ5">
    <property type="method" value="X-ray"/>
    <property type="resolution" value="2.60 A"/>
    <property type="chains" value="C/D=286-476"/>
</dbReference>
<dbReference type="PDB" id="6F6P">
    <property type="method" value="X-ray"/>
    <property type="resolution" value="2.45 A"/>
    <property type="chains" value="A/B/C/D=159-261"/>
</dbReference>
<dbReference type="PDBsum" id="4LHX"/>
<dbReference type="PDBsum" id="4LHY"/>
<dbReference type="PDBsum" id="4LHZ"/>
<dbReference type="PDBsum" id="4UJ3"/>
<dbReference type="PDBsum" id="4UJ4"/>
<dbReference type="PDBsum" id="4UJ5"/>
<dbReference type="PDBsum" id="6F6P"/>
<dbReference type="SMR" id="Q96QF0"/>
<dbReference type="BioGRID" id="125566">
    <property type="interactions" value="117"/>
</dbReference>
<dbReference type="CORUM" id="Q96QF0"/>
<dbReference type="DIP" id="DIP-41703N"/>
<dbReference type="FunCoup" id="Q96QF0">
    <property type="interactions" value="1025"/>
</dbReference>
<dbReference type="IntAct" id="Q96QF0">
    <property type="interactions" value="95"/>
</dbReference>
<dbReference type="MINT" id="Q96QF0"/>
<dbReference type="STRING" id="9606.ENSP00000447300"/>
<dbReference type="GlyGen" id="Q96QF0">
    <property type="glycosylation" value="1 site, 1 O-linked glycan (1 site)"/>
</dbReference>
<dbReference type="iPTMnet" id="Q96QF0"/>
<dbReference type="PhosphoSitePlus" id="Q96QF0"/>
<dbReference type="BioMuta" id="RAB3IP"/>
<dbReference type="DMDM" id="71152025"/>
<dbReference type="jPOST" id="Q96QF0"/>
<dbReference type="MassIVE" id="Q96QF0"/>
<dbReference type="PaxDb" id="9606-ENSP00000447300"/>
<dbReference type="PeptideAtlas" id="Q96QF0"/>
<dbReference type="ProteomicsDB" id="77867">
    <molecule id="Q96QF0-1"/>
</dbReference>
<dbReference type="ProteomicsDB" id="77868">
    <molecule id="Q96QF0-2"/>
</dbReference>
<dbReference type="ProteomicsDB" id="77869">
    <molecule id="Q96QF0-3"/>
</dbReference>
<dbReference type="ProteomicsDB" id="77870">
    <molecule id="Q96QF0-4"/>
</dbReference>
<dbReference type="ProteomicsDB" id="77871">
    <molecule id="Q96QF0-5"/>
</dbReference>
<dbReference type="ProteomicsDB" id="77872">
    <molecule id="Q96QF0-6"/>
</dbReference>
<dbReference type="ProteomicsDB" id="77873">
    <molecule id="Q96QF0-7"/>
</dbReference>
<dbReference type="ProteomicsDB" id="77874">
    <molecule id="Q96QF0-8"/>
</dbReference>
<dbReference type="Pumba" id="Q96QF0"/>
<dbReference type="Antibodypedia" id="29437">
    <property type="antibodies" value="243 antibodies from 25 providers"/>
</dbReference>
<dbReference type="DNASU" id="117177"/>
<dbReference type="Ensembl" id="ENST00000247833.12">
    <molecule id="Q96QF0-2"/>
    <property type="protein sequence ID" value="ENSP00000247833.7"/>
    <property type="gene ID" value="ENSG00000127328.22"/>
</dbReference>
<dbReference type="Ensembl" id="ENST00000362025.9">
    <molecule id="Q96QF0-4"/>
    <property type="protein sequence ID" value="ENSP00000355381.5"/>
    <property type="gene ID" value="ENSG00000127328.22"/>
</dbReference>
<dbReference type="Ensembl" id="ENST00000378815.10">
    <molecule id="Q96QF0-7"/>
    <property type="protein sequence ID" value="ENSP00000368092.6"/>
    <property type="gene ID" value="ENSG00000127328.22"/>
</dbReference>
<dbReference type="Ensembl" id="ENST00000417413.7">
    <molecule id="Q96QF0-5"/>
    <property type="protein sequence ID" value="ENSP00000436304.2"/>
    <property type="gene ID" value="ENSG00000127328.22"/>
</dbReference>
<dbReference type="Ensembl" id="ENST00000483530.6">
    <molecule id="Q96QF0-3"/>
    <property type="protein sequence ID" value="ENSP00000419216.2"/>
    <property type="gene ID" value="ENSG00000127328.22"/>
</dbReference>
<dbReference type="Ensembl" id="ENST00000550536.5">
    <molecule id="Q96QF0-1"/>
    <property type="protein sequence ID" value="ENSP00000447300.1"/>
    <property type="gene ID" value="ENSG00000127328.22"/>
</dbReference>
<dbReference type="Ensembl" id="ENST00000551641.5">
    <molecule id="Q96QF0-8"/>
    <property type="protein sequence ID" value="ENSP00000448773.1"/>
    <property type="gene ID" value="ENSG00000127328.22"/>
</dbReference>
<dbReference type="Ensembl" id="ENST00000552199.5">
    <molecule id="Q96QF0-6"/>
    <property type="protein sequence ID" value="ENSP00000448944.1"/>
    <property type="gene ID" value="ENSG00000127328.22"/>
</dbReference>
<dbReference type="Ensembl" id="ENST00000553099.5">
    <molecule id="Q96QF0-8"/>
    <property type="protein sequence ID" value="ENSP00000448027.1"/>
    <property type="gene ID" value="ENSG00000127328.22"/>
</dbReference>
<dbReference type="GeneID" id="117177"/>
<dbReference type="KEGG" id="hsa:117177"/>
<dbReference type="MANE-Select" id="ENST00000247833.12">
    <molecule id="Q96QF0-2"/>
    <property type="protein sequence ID" value="ENSP00000247833.7"/>
    <property type="RefSeq nucleotide sequence ID" value="NM_022456.5"/>
    <property type="RefSeq protein sequence ID" value="NP_071901.2"/>
</dbReference>
<dbReference type="UCSC" id="uc001svm.5">
    <molecule id="Q96QF0-1"/>
    <property type="organism name" value="human"/>
</dbReference>
<dbReference type="AGR" id="HGNC:16508"/>
<dbReference type="CTD" id="117177"/>
<dbReference type="DisGeNET" id="117177"/>
<dbReference type="GeneCards" id="RAB3IP"/>
<dbReference type="HGNC" id="HGNC:16508">
    <property type="gene designation" value="RAB3IP"/>
</dbReference>
<dbReference type="HPA" id="ENSG00000127328">
    <property type="expression patterns" value="Tissue enhanced (choroid)"/>
</dbReference>
<dbReference type="MIM" id="608686">
    <property type="type" value="gene"/>
</dbReference>
<dbReference type="neXtProt" id="NX_Q96QF0"/>
<dbReference type="OpenTargets" id="ENSG00000127328"/>
<dbReference type="PharmGKB" id="PA34136"/>
<dbReference type="VEuPathDB" id="HostDB:ENSG00000127328"/>
<dbReference type="eggNOG" id="KOG4324">
    <property type="taxonomic scope" value="Eukaryota"/>
</dbReference>
<dbReference type="GeneTree" id="ENSGT00940000157998"/>
<dbReference type="HOGENOM" id="CLU_038204_2_0_1"/>
<dbReference type="InParanoid" id="Q96QF0"/>
<dbReference type="OMA" id="WEIMQLR"/>
<dbReference type="OrthoDB" id="5560525at2759"/>
<dbReference type="PAN-GO" id="Q96QF0">
    <property type="GO annotations" value="2 GO annotations based on evolutionary models"/>
</dbReference>
<dbReference type="PhylomeDB" id="Q96QF0"/>
<dbReference type="TreeFam" id="TF313748"/>
<dbReference type="PathwayCommons" id="Q96QF0"/>
<dbReference type="Reactome" id="R-HSA-5620912">
    <property type="pathway name" value="Anchoring of the basal body to the plasma membrane"/>
</dbReference>
<dbReference type="Reactome" id="R-HSA-5620916">
    <property type="pathway name" value="VxPx cargo-targeting to cilium"/>
</dbReference>
<dbReference type="Reactome" id="R-HSA-5620922">
    <property type="pathway name" value="BBSome-mediated cargo-targeting to cilium"/>
</dbReference>
<dbReference type="Reactome" id="R-HSA-8876198">
    <property type="pathway name" value="RAB GEFs exchange GTP for GDP on RABs"/>
</dbReference>
<dbReference type="SignaLink" id="Q96QF0"/>
<dbReference type="SIGNOR" id="Q96QF0"/>
<dbReference type="BioGRID-ORCS" id="117177">
    <property type="hits" value="15 hits in 1156 CRISPR screens"/>
</dbReference>
<dbReference type="ChiTaRS" id="RAB3IP">
    <property type="organism name" value="human"/>
</dbReference>
<dbReference type="EvolutionaryTrace" id="Q96QF0"/>
<dbReference type="GeneWiki" id="RAB3IP"/>
<dbReference type="GenomeRNAi" id="117177"/>
<dbReference type="Pharos" id="Q96QF0">
    <property type="development level" value="Tbio"/>
</dbReference>
<dbReference type="PRO" id="PR:Q96QF0"/>
<dbReference type="Proteomes" id="UP000005640">
    <property type="component" value="Chromosome 12"/>
</dbReference>
<dbReference type="RNAct" id="Q96QF0">
    <property type="molecule type" value="protein"/>
</dbReference>
<dbReference type="Bgee" id="ENSG00000127328">
    <property type="expression patterns" value="Expressed in right testis and 143 other cell types or tissues"/>
</dbReference>
<dbReference type="ExpressionAtlas" id="Q96QF0">
    <property type="expression patterns" value="baseline and differential"/>
</dbReference>
<dbReference type="GO" id="GO:0005813">
    <property type="term" value="C:centrosome"/>
    <property type="evidence" value="ECO:0000314"/>
    <property type="project" value="BHF-UCL"/>
</dbReference>
<dbReference type="GO" id="GO:0036064">
    <property type="term" value="C:ciliary basal body"/>
    <property type="evidence" value="ECO:0000304"/>
    <property type="project" value="BHF-UCL"/>
</dbReference>
<dbReference type="GO" id="GO:0005829">
    <property type="term" value="C:cytosol"/>
    <property type="evidence" value="ECO:0000314"/>
    <property type="project" value="HPA"/>
</dbReference>
<dbReference type="GO" id="GO:0030027">
    <property type="term" value="C:lamellipodium"/>
    <property type="evidence" value="ECO:0007669"/>
    <property type="project" value="UniProtKB-SubCell"/>
</dbReference>
<dbReference type="GO" id="GO:0005654">
    <property type="term" value="C:nucleoplasm"/>
    <property type="evidence" value="ECO:0000314"/>
    <property type="project" value="HPA"/>
</dbReference>
<dbReference type="GO" id="GO:0005634">
    <property type="term" value="C:nucleus"/>
    <property type="evidence" value="ECO:0000314"/>
    <property type="project" value="UniProtKB"/>
</dbReference>
<dbReference type="GO" id="GO:0048471">
    <property type="term" value="C:perinuclear region of cytoplasm"/>
    <property type="evidence" value="ECO:0007669"/>
    <property type="project" value="Ensembl"/>
</dbReference>
<dbReference type="GO" id="GO:1990635">
    <property type="term" value="C:proximal dendrite"/>
    <property type="evidence" value="ECO:0007669"/>
    <property type="project" value="Ensembl"/>
</dbReference>
<dbReference type="GO" id="GO:0031982">
    <property type="term" value="C:vesicle"/>
    <property type="evidence" value="ECO:0007669"/>
    <property type="project" value="UniProtKB-SubCell"/>
</dbReference>
<dbReference type="GO" id="GO:0051020">
    <property type="term" value="F:GTPase binding"/>
    <property type="evidence" value="ECO:0007669"/>
    <property type="project" value="Ensembl"/>
</dbReference>
<dbReference type="GO" id="GO:0005085">
    <property type="term" value="F:guanyl-nucleotide exchange factor activity"/>
    <property type="evidence" value="ECO:0000314"/>
    <property type="project" value="UniProtKB"/>
</dbReference>
<dbReference type="GO" id="GO:0042802">
    <property type="term" value="F:identical protein binding"/>
    <property type="evidence" value="ECO:0000353"/>
    <property type="project" value="IntAct"/>
</dbReference>
<dbReference type="GO" id="GO:0097711">
    <property type="term" value="P:ciliary basal body-plasma membrane docking"/>
    <property type="evidence" value="ECO:0000304"/>
    <property type="project" value="Reactome"/>
</dbReference>
<dbReference type="GO" id="GO:0060271">
    <property type="term" value="P:cilium assembly"/>
    <property type="evidence" value="ECO:0000315"/>
    <property type="project" value="BHF-UCL"/>
</dbReference>
<dbReference type="GO" id="GO:0006893">
    <property type="term" value="P:Golgi to plasma membrane transport"/>
    <property type="evidence" value="ECO:0000304"/>
    <property type="project" value="BHF-UCL"/>
</dbReference>
<dbReference type="GO" id="GO:0051490">
    <property type="term" value="P:negative regulation of filopodium assembly"/>
    <property type="evidence" value="ECO:0007669"/>
    <property type="project" value="Ensembl"/>
</dbReference>
<dbReference type="GO" id="GO:0033365">
    <property type="term" value="P:protein localization to organelle"/>
    <property type="evidence" value="ECO:0000315"/>
    <property type="project" value="BHF-UCL"/>
</dbReference>
<dbReference type="GO" id="GO:0006612">
    <property type="term" value="P:protein targeting to membrane"/>
    <property type="evidence" value="ECO:0000314"/>
    <property type="project" value="UniProtKB"/>
</dbReference>
<dbReference type="GO" id="GO:0015031">
    <property type="term" value="P:protein transport"/>
    <property type="evidence" value="ECO:0007669"/>
    <property type="project" value="UniProtKB-KW"/>
</dbReference>
<dbReference type="CDD" id="cd21068">
    <property type="entry name" value="Rab11BD_RAB3IP"/>
    <property type="match status" value="1"/>
</dbReference>
<dbReference type="FunFam" id="1.20.5.4880:FF:000001">
    <property type="entry name" value="Guanine nucleotide exchange factor for Rab-3A"/>
    <property type="match status" value="1"/>
</dbReference>
<dbReference type="Gene3D" id="1.20.5.4880">
    <property type="match status" value="1"/>
</dbReference>
<dbReference type="InterPro" id="IPR040351">
    <property type="entry name" value="RAB3IL/RAB3IP/Sec2"/>
</dbReference>
<dbReference type="InterPro" id="IPR009449">
    <property type="entry name" value="Sec2_N"/>
</dbReference>
<dbReference type="PANTHER" id="PTHR14430:SF2">
    <property type="entry name" value="RAB-3A-INTERACTING PROTEIN"/>
    <property type="match status" value="1"/>
</dbReference>
<dbReference type="PANTHER" id="PTHR14430">
    <property type="entry name" value="RABIN3-RELATED"/>
    <property type="match status" value="1"/>
</dbReference>
<dbReference type="Pfam" id="PF06428">
    <property type="entry name" value="Sec2p"/>
    <property type="match status" value="1"/>
</dbReference>
<dbReference type="SUPFAM" id="SSF144284">
    <property type="entry name" value="Sec2 N-terminal region"/>
    <property type="match status" value="1"/>
</dbReference>
<evidence type="ECO:0000250" key="1">
    <source>
        <dbReference type="UniProtKB" id="Q68EF0"/>
    </source>
</evidence>
<evidence type="ECO:0000255" key="2"/>
<evidence type="ECO:0000256" key="3">
    <source>
        <dbReference type="SAM" id="MobiDB-lite"/>
    </source>
</evidence>
<evidence type="ECO:0000269" key="4">
    <source>
    </source>
</evidence>
<evidence type="ECO:0000269" key="5">
    <source>
    </source>
</evidence>
<evidence type="ECO:0000269" key="6">
    <source>
    </source>
</evidence>
<evidence type="ECO:0000269" key="7">
    <source>
    </source>
</evidence>
<evidence type="ECO:0000269" key="8">
    <source>
    </source>
</evidence>
<evidence type="ECO:0000269" key="9">
    <source>
    </source>
</evidence>
<evidence type="ECO:0000269" key="10">
    <source>
    </source>
</evidence>
<evidence type="ECO:0000269" key="11">
    <source>
    </source>
</evidence>
<evidence type="ECO:0000269" key="12">
    <source>
    </source>
</evidence>
<evidence type="ECO:0000269" key="13">
    <source>
    </source>
</evidence>
<evidence type="ECO:0000303" key="14">
    <source>
    </source>
</evidence>
<evidence type="ECO:0000303" key="15">
    <source>
    </source>
</evidence>
<evidence type="ECO:0000303" key="16">
    <source>
    </source>
</evidence>
<evidence type="ECO:0000303" key="17">
    <source>
    </source>
</evidence>
<evidence type="ECO:0000305" key="18"/>
<evidence type="ECO:0000312" key="19">
    <source>
        <dbReference type="EMBL" id="AAH15548.1"/>
    </source>
</evidence>
<evidence type="ECO:0000312" key="20">
    <source>
        <dbReference type="EMBL" id="AAH59358.1"/>
    </source>
</evidence>
<evidence type="ECO:0000312" key="21">
    <source>
        <dbReference type="EMBL" id="BAB15391.1"/>
    </source>
</evidence>
<evidence type="ECO:0000312" key="22">
    <source>
        <dbReference type="EMBL" id="BAB55202.1"/>
    </source>
</evidence>
<evidence type="ECO:0000312" key="23">
    <source>
        <dbReference type="EMBL" id="CAC59836.1"/>
    </source>
</evidence>
<evidence type="ECO:0007744" key="24">
    <source>
        <dbReference type="PDB" id="4UJ3"/>
    </source>
</evidence>
<evidence type="ECO:0007744" key="25">
    <source>
        <dbReference type="PDB" id="4UJ4"/>
    </source>
</evidence>
<evidence type="ECO:0007744" key="26">
    <source>
        <dbReference type="PDB" id="4UJ5"/>
    </source>
</evidence>
<evidence type="ECO:0007744" key="27">
    <source>
    </source>
</evidence>
<evidence type="ECO:0007744" key="28">
    <source>
    </source>
</evidence>
<evidence type="ECO:0007829" key="29">
    <source>
        <dbReference type="PDB" id="4UJ3"/>
    </source>
</evidence>
<evidence type="ECO:0007829" key="30">
    <source>
        <dbReference type="PDB" id="4UJ5"/>
    </source>
</evidence>
<evidence type="ECO:0007829" key="31">
    <source>
        <dbReference type="PDB" id="6F6P"/>
    </source>
</evidence>
<gene>
    <name evidence="23" type="primary">RAB3IP</name>
    <name type="synonym">RABIN8</name>
</gene>
<comment type="function">
    <text evidence="5 6 7 9 11 12">Guanine nucleotide exchange factor (GEF) which may activate RAB8A and RAB8B (PubMed:12221131, PubMed:26824392). Promotes the exchange of GDP to GTP, converting inactive GDP-bound Rab proteins into their active GTP-bound form (PubMed:12221131, PubMed:26824392). Mediates the release of GDP from RAB8A and RAB8B but not from RAB3A or RAB5 (PubMed:20937701, PubMed:26824392). Modulates actin organization and promotes polarized transport of RAB8A-specific vesicles to the cell surface (PubMed:12221131). Together with RAB11A, RAB8A, the exocyst complex, PARD3, PRKCI, ANXA2, CDC42 and DNMBP promotes transcytosis of PODXL to the apical membrane initiation sites (AMIS), apical surface formation and lumenogenesis (PubMed:20890297). Part of the ciliary targeting complex containing Rab11, ASAP1, RAB3IP and RAB11FIP3 and ARF4 that promotes RAB3IP preciliary vesicle trafficking to mother centriole and ciliogenesis initiation (PubMed:25673879, PubMed:31204173).</text>
</comment>
<comment type="activity regulation">
    <text evidence="12">Phosphorylation by ATK1 alters its GEF activity (PubMed:31204173). Complex formation with RAB11A and RAB11FIP3 and ciliogenesis function are competitively inhibited by RAB11A-WDR44 interaction (PubMed:31204173).</text>
</comment>
<comment type="subunit">
    <text evidence="4 5 8 9 10 11 12 13">Homodimer (PubMed:26258637). Interacts with the N-terminal region of SSX2 (PubMed:12007189). Interacts with the GDP-bound forms of RAB8A and RAB8B (PubMed:12221131, PubMed:26824392). The interaction with RAB8A is prevented by phosphorylation of RAB8A at 'Thr-72' (PubMed:26824392). Interacts with the GDP-bound forms of RAB3A and RAB3D (PubMed:12221131). Interacts with DCDC1 (PubMed:12007189, PubMed:12221131, PubMed:22159412, PubMed:26824392). Interacts (via the N-terminal region) with TRAPPC14; this interaction mediates RAB3IP association with the TRAPP II complex (PubMed:31467083). Forms a heterotetramer with RAB11A where RAB3IP homodimer binds two RAB11A subunits (PubMed:26258637). Forms a complex with RAB11A and RAB11FIP3, probably a heterohexamer with two of each protein subunit, where Rabin8/RAB3IP and RAB11FIP3 simultaneously bind to RAB11A; the complex promotes preciliary trafficking (PubMed:26258637, PubMed:31204173). Forms a complex containing RAB11A, ASAP1, RAB3IP, RAP11FIP3 and ARF4; the complex promotes preciliary trafficking; the complex binds to RHO in photoreceptor cells and promotes RHO ciliary transport (PubMed:25673879).</text>
</comment>
<comment type="interaction">
    <interactant intactId="EBI-747844">
        <id>Q96QF0</id>
    </interactant>
    <interactant intactId="EBI-744695">
        <id>Q8N9N5</id>
        <label>BANP</label>
    </interactant>
    <organismsDiffer>false</organismsDiffer>
    <experiments>3</experiments>
</comment>
<comment type="interaction">
    <interactant intactId="EBI-747844">
        <id>Q96QF0</id>
    </interactant>
    <interactant intactId="EBI-743375">
        <id>Q9NX63</id>
        <label>CHCHD3</label>
    </interactant>
    <organismsDiffer>false</organismsDiffer>
    <experiments>3</experiments>
</comment>
<comment type="interaction">
    <interactant intactId="EBI-747844">
        <id>Q96QF0</id>
    </interactant>
    <interactant intactId="EBI-744506">
        <id>Q86V42</id>
        <label>FAM124A</label>
    </interactant>
    <organismsDiffer>false</organismsDiffer>
    <experiments>3</experiments>
</comment>
<comment type="interaction">
    <interactant intactId="EBI-747844">
        <id>Q96QF0</id>
    </interactant>
    <interactant intactId="EBI-10171697">
        <id>Q6A162</id>
        <label>KRT40</label>
    </interactant>
    <organismsDiffer>false</organismsDiffer>
    <experiments>3</experiments>
</comment>
<comment type="interaction">
    <interactant intactId="EBI-747844">
        <id>Q96QF0</id>
    </interactant>
    <interactant intactId="EBI-747693">
        <id>P41227</id>
        <label>NAA10</label>
    </interactant>
    <organismsDiffer>false</organismsDiffer>
    <experiments>3</experiments>
</comment>
<comment type="interaction">
    <interactant intactId="EBI-747844">
        <id>Q96QF0</id>
    </interactant>
    <interactant intactId="EBI-741582">
        <id>O60568</id>
        <label>PLOD3</label>
    </interactant>
    <organismsDiffer>false</organismsDiffer>
    <experiments>4</experiments>
</comment>
<comment type="interaction">
    <interactant intactId="EBI-747844">
        <id>Q96QF0</id>
    </interactant>
    <interactant intactId="EBI-368321">
        <id>O60437</id>
        <label>PPL</label>
    </interactant>
    <organismsDiffer>false</organismsDiffer>
    <experiments>3</experiments>
</comment>
<comment type="interaction">
    <interactant intactId="EBI-747844">
        <id>Q96QF0</id>
    </interactant>
    <interactant intactId="EBI-1045943">
        <id>P20336</id>
        <label>RAB3A</label>
    </interactant>
    <organismsDiffer>false</organismsDiffer>
    <experiments>3</experiments>
</comment>
<comment type="interaction">
    <interactant intactId="EBI-747844">
        <id>Q96QF0</id>
    </interactant>
    <interactant intactId="EBI-743796">
        <id>Q8TBN0</id>
        <label>RAB3IL1</label>
    </interactant>
    <organismsDiffer>false</organismsDiffer>
    <experiments>12</experiments>
</comment>
<comment type="interaction">
    <interactant intactId="EBI-747844">
        <id>Q96QF0</id>
    </interactant>
    <interactant intactId="EBI-722293">
        <id>P61006</id>
        <label>RAB8A</label>
    </interactant>
    <organismsDiffer>false</organismsDiffer>
    <experiments>5</experiments>
</comment>
<comment type="interaction">
    <interactant intactId="EBI-747844">
        <id>Q96QF0</id>
    </interactant>
    <interactant intactId="EBI-3941207">
        <id>Q96T51</id>
        <label>RUFY1</label>
    </interactant>
    <organismsDiffer>false</organismsDiffer>
    <experiments>3</experiments>
</comment>
<comment type="interaction">
    <interactant intactId="EBI-747844">
        <id>Q96QF0</id>
    </interactant>
    <interactant intactId="EBI-476295">
        <id>P31947</id>
        <label>SFN</label>
    </interactant>
    <organismsDiffer>false</organismsDiffer>
    <experiments>3</experiments>
</comment>
<comment type="interaction">
    <interactant intactId="EBI-747844">
        <id>Q96QF0</id>
    </interactant>
    <interactant intactId="EBI-2210673">
        <id>Q16385</id>
        <label>SSX2B</label>
    </interactant>
    <organismsDiffer>false</organismsDiffer>
    <experiments>4</experiments>
</comment>
<comment type="interaction">
    <interactant intactId="EBI-747844">
        <id>Q96QF0</id>
    </interactant>
    <interactant intactId="EBI-6160572">
        <id>P48553</id>
        <label>TRAPPC10</label>
    </interactant>
    <organismsDiffer>false</organismsDiffer>
    <experiments>7</experiments>
</comment>
<comment type="interaction">
    <interactant intactId="EBI-747844">
        <id>Q96QF0</id>
    </interactant>
    <interactant intactId="EBI-743573">
        <id>O75865</id>
        <label>TRAPPC6A</label>
    </interactant>
    <organismsDiffer>false</organismsDiffer>
    <experiments>4</experiments>
</comment>
<comment type="interaction">
    <interactant intactId="EBI-747844">
        <id>Q96QF0</id>
    </interactant>
    <interactant intactId="EBI-720304">
        <id>Q86VK4</id>
        <label>ZNF410</label>
    </interactant>
    <organismsDiffer>false</organismsDiffer>
    <experiments>3</experiments>
</comment>
<comment type="interaction">
    <interactant intactId="EBI-747844">
        <id>Q96QF0</id>
    </interactant>
    <interactant intactId="EBI-25492395">
        <id>PRO_0000449633</id>
        <label>rep</label>
        <dbReference type="UniProtKB" id="P0DTD1"/>
    </interactant>
    <organismsDiffer>true</organismsDiffer>
    <experiments>4</experiments>
</comment>
<comment type="interaction">
    <interactant intactId="EBI-747860">
        <id>Q96QF0-1</id>
    </interactant>
    <interactant intactId="EBI-1805484">
        <id>Q8NFJ9</id>
        <label>BBS1</label>
    </interactant>
    <organismsDiffer>false</organismsDiffer>
    <experiments>2</experiments>
</comment>
<comment type="interaction">
    <interactant intactId="EBI-747865">
        <id>Q96QF0-2</id>
    </interactant>
    <interactant intactId="EBI-741582">
        <id>O60568</id>
        <label>PLOD3</label>
    </interactant>
    <organismsDiffer>false</organismsDiffer>
    <experiments>3</experiments>
</comment>
<comment type="interaction">
    <interactant intactId="EBI-747865">
        <id>Q96QF0-2</id>
    </interactant>
    <interactant intactId="EBI-745098">
        <id>P62491</id>
        <label>RAB11A</label>
    </interactant>
    <organismsDiffer>false</organismsDiffer>
    <experiments>8</experiments>
</comment>
<comment type="interaction">
    <interactant intactId="EBI-747865">
        <id>Q96QF0-2</id>
    </interactant>
    <interactant intactId="EBI-15605207">
        <id>O75154-1</id>
        <label>RAB11FIP3</label>
    </interactant>
    <organismsDiffer>false</organismsDiffer>
    <experiments>6</experiments>
</comment>
<comment type="interaction">
    <interactant intactId="EBI-747865">
        <id>Q96QF0-2</id>
    </interactant>
    <interactant intactId="EBI-747865">
        <id>Q96QF0-2</id>
        <label>RAB3IP</label>
    </interactant>
    <organismsDiffer>false</organismsDiffer>
    <experiments>2</experiments>
</comment>
<comment type="interaction">
    <interactant intactId="EBI-747865">
        <id>Q96QF0-2</id>
    </interactant>
    <interactant intactId="EBI-722293">
        <id>P61006</id>
        <label>RAB8A</label>
    </interactant>
    <organismsDiffer>false</organismsDiffer>
    <experiments>2</experiments>
</comment>
<comment type="interaction">
    <interactant intactId="EBI-747865">
        <id>Q96QF0-2</id>
    </interactant>
    <interactant intactId="EBI-2210673">
        <id>Q16385</id>
        <label>SSX2B</label>
    </interactant>
    <organismsDiffer>false</organismsDiffer>
    <experiments>4</experiments>
</comment>
<comment type="interaction">
    <interactant intactId="EBI-11984839">
        <id>Q96QF0-7</id>
    </interactant>
    <interactant intactId="EBI-10988864">
        <id>P46379-2</id>
        <label>BAG6</label>
    </interactant>
    <organismsDiffer>false</organismsDiffer>
    <experiments>3</experiments>
</comment>
<comment type="interaction">
    <interactant intactId="EBI-11984839">
        <id>Q96QF0-7</id>
    </interactant>
    <interactant intactId="EBI-11524452">
        <id>Q8N9N5-2</id>
        <label>BANP</label>
    </interactant>
    <organismsDiffer>false</organismsDiffer>
    <experiments>6</experiments>
</comment>
<comment type="interaction">
    <interactant intactId="EBI-11984839">
        <id>Q96QF0-7</id>
    </interactant>
    <interactant intactId="EBI-16429296">
        <id>Q8N9N5-7</id>
        <label>BANP</label>
    </interactant>
    <organismsDiffer>false</organismsDiffer>
    <experiments>3</experiments>
</comment>
<comment type="interaction">
    <interactant intactId="EBI-11984839">
        <id>Q96QF0-7</id>
    </interactant>
    <interactant intactId="EBI-10181422">
        <id>A0A1B0GWI1</id>
        <label>CCDC196</label>
    </interactant>
    <organismsDiffer>false</organismsDiffer>
    <experiments>3</experiments>
</comment>
<comment type="interaction">
    <interactant intactId="EBI-11984839">
        <id>Q96QF0-7</id>
    </interactant>
    <interactant intactId="EBI-10976677">
        <id>G5E9A7</id>
        <label>DMWD</label>
    </interactant>
    <organismsDiffer>false</organismsDiffer>
    <experiments>3</experiments>
</comment>
<comment type="interaction">
    <interactant intactId="EBI-11984839">
        <id>Q96QF0-7</id>
    </interactant>
    <interactant intactId="EBI-11514233">
        <id>P59910</id>
        <label>DNAJB13</label>
    </interactant>
    <organismsDiffer>false</organismsDiffer>
    <experiments>3</experiments>
</comment>
<comment type="interaction">
    <interactant intactId="EBI-11984839">
        <id>Q96QF0-7</id>
    </interactant>
    <interactant intactId="EBI-12593112">
        <id>O75190-2</id>
        <label>DNAJB6</label>
    </interactant>
    <organismsDiffer>false</organismsDiffer>
    <experiments>3</experiments>
</comment>
<comment type="interaction">
    <interactant intactId="EBI-11984839">
        <id>Q96QF0-7</id>
    </interactant>
    <interactant intactId="EBI-10968534">
        <id>P50570-2</id>
        <label>DNM2</label>
    </interactant>
    <organismsDiffer>false</organismsDiffer>
    <experiments>3</experiments>
</comment>
<comment type="interaction">
    <interactant intactId="EBI-11984839">
        <id>Q96QF0-7</id>
    </interactant>
    <interactant intactId="EBI-744302">
        <id>P14136</id>
        <label>GFAP</label>
    </interactant>
    <organismsDiffer>false</organismsDiffer>
    <experiments>3</experiments>
</comment>
<comment type="interaction">
    <interactant intactId="EBI-11984839">
        <id>Q96QF0-7</id>
    </interactant>
    <interactant intactId="EBI-6398041">
        <id>Q9UMF0</id>
        <label>ICAM5</label>
    </interactant>
    <organismsDiffer>false</organismsDiffer>
    <experiments>3</experiments>
</comment>
<comment type="interaction">
    <interactant intactId="EBI-11984839">
        <id>Q96QF0-7</id>
    </interactant>
    <interactant intactId="EBI-1055254">
        <id>Q8WXH2</id>
        <label>JPH3</label>
    </interactant>
    <organismsDiffer>false</organismsDiffer>
    <experiments>3</experiments>
</comment>
<comment type="interaction">
    <interactant intactId="EBI-11984839">
        <id>Q96QF0-7</id>
    </interactant>
    <interactant intactId="EBI-948266">
        <id>O14901</id>
        <label>KLF11</label>
    </interactant>
    <organismsDiffer>false</organismsDiffer>
    <experiments>3</experiments>
</comment>
<comment type="interaction">
    <interactant intactId="EBI-11984839">
        <id>Q96QF0-7</id>
    </interactant>
    <interactant intactId="EBI-11323212">
        <id>Q8IYB1</id>
        <label>MB21D2</label>
    </interactant>
    <organismsDiffer>false</organismsDiffer>
    <experiments>3</experiments>
</comment>
<comment type="interaction">
    <interactant intactId="EBI-11984839">
        <id>Q96QF0-7</id>
    </interactant>
    <interactant intactId="EBI-11978579">
        <id>O95983-2</id>
        <label>MBD3</label>
    </interactant>
    <organismsDiffer>false</organismsDiffer>
    <experiments>3</experiments>
</comment>
<comment type="interaction">
    <interactant intactId="EBI-11984839">
        <id>Q96QF0-7</id>
    </interactant>
    <interactant intactId="EBI-747693">
        <id>P41227</id>
        <label>NAA10</label>
    </interactant>
    <organismsDiffer>false</organismsDiffer>
    <experiments>3</experiments>
</comment>
<comment type="interaction">
    <interactant intactId="EBI-11984839">
        <id>Q96QF0-7</id>
    </interactant>
    <interactant intactId="EBI-713665">
        <id>P19404</id>
        <label>NDUFV2</label>
    </interactant>
    <organismsDiffer>false</organismsDiffer>
    <experiments>3</experiments>
</comment>
<comment type="interaction">
    <interactant intactId="EBI-11984839">
        <id>Q96QF0-7</id>
    </interactant>
    <interactant intactId="EBI-6259410">
        <id>Q86TG7-2</id>
        <label>PEG10</label>
    </interactant>
    <organismsDiffer>false</organismsDiffer>
    <experiments>3</experiments>
</comment>
<comment type="interaction">
    <interactant intactId="EBI-11984839">
        <id>Q96QF0-7</id>
    </interactant>
    <interactant intactId="EBI-602382">
        <id>Q16512</id>
        <label>PKN1</label>
    </interactant>
    <organismsDiffer>false</organismsDiffer>
    <experiments>3</experiments>
</comment>
<comment type="interaction">
    <interactant intactId="EBI-11984839">
        <id>Q96QF0-7</id>
    </interactant>
    <interactant intactId="EBI-50433196">
        <id>A0A6Q8PF08</id>
        <label>PMP22</label>
    </interactant>
    <organismsDiffer>false</organismsDiffer>
    <experiments>3</experiments>
</comment>
<comment type="interaction">
    <interactant intactId="EBI-11984839">
        <id>Q96QF0-7</id>
    </interactant>
    <interactant intactId="EBI-368321">
        <id>O60437</id>
        <label>PPL</label>
    </interactant>
    <organismsDiffer>false</organismsDiffer>
    <experiments>3</experiments>
</comment>
<comment type="interaction">
    <interactant intactId="EBI-11984839">
        <id>Q96QF0-7</id>
    </interactant>
    <interactant intactId="EBI-1053424">
        <id>O43741</id>
        <label>PRKAB2</label>
    </interactant>
    <organismsDiffer>false</organismsDiffer>
    <experiments>3</experiments>
</comment>
<comment type="interaction">
    <interactant intactId="EBI-11984839">
        <id>Q96QF0-7</id>
    </interactant>
    <interactant intactId="EBI-1045943">
        <id>P20336</id>
        <label>RAB3A</label>
    </interactant>
    <organismsDiffer>false</organismsDiffer>
    <experiments>3</experiments>
</comment>
<comment type="interaction">
    <interactant intactId="EBI-11984839">
        <id>Q96QF0-7</id>
    </interactant>
    <interactant intactId="EBI-3386067">
        <id>O95716</id>
        <label>RAB3D</label>
    </interactant>
    <organismsDiffer>false</organismsDiffer>
    <experiments>3</experiments>
</comment>
<comment type="interaction">
    <interactant intactId="EBI-11984839">
        <id>Q96QF0-7</id>
    </interactant>
    <interactant intactId="EBI-5235340">
        <id>Q7Z699</id>
        <label>SPRED1</label>
    </interactant>
    <organismsDiffer>false</organismsDiffer>
    <experiments>3</experiments>
</comment>
<comment type="interaction">
    <interactant intactId="EBI-11984839">
        <id>Q96QF0-7</id>
    </interactant>
    <interactant intactId="EBI-12018146">
        <id>Q8IYX1</id>
        <label>TBC1D21</label>
    </interactant>
    <organismsDiffer>false</organismsDiffer>
    <experiments>3</experiments>
</comment>
<comment type="interaction">
    <interactant intactId="EBI-11984839">
        <id>Q96QF0-7</id>
    </interactant>
    <interactant intactId="EBI-11139477">
        <id>Q96N21</id>
        <label>TEPSIN</label>
    </interactant>
    <organismsDiffer>false</organismsDiffer>
    <experiments>3</experiments>
</comment>
<comment type="interaction">
    <interactant intactId="EBI-11984839">
        <id>Q96QF0-7</id>
    </interactant>
    <interactant intactId="EBI-25847109">
        <id>O14656-2</id>
        <label>TOR1A</label>
    </interactant>
    <organismsDiffer>false</organismsDiffer>
    <experiments>3</experiments>
</comment>
<comment type="interaction">
    <interactant intactId="EBI-11984839">
        <id>Q96QF0-7</id>
    </interactant>
    <interactant intactId="EBI-8451480">
        <id>O75865-2</id>
        <label>TRAPPC6A</label>
    </interactant>
    <organismsDiffer>false</organismsDiffer>
    <experiments>3</experiments>
</comment>
<comment type="interaction">
    <interactant intactId="EBI-11984839">
        <id>Q96QF0-7</id>
    </interactant>
    <interactant intactId="EBI-711925">
        <id>Q05516</id>
        <label>ZBTB16</label>
    </interactant>
    <organismsDiffer>false</organismsDiffer>
    <experiments>3</experiments>
</comment>
<comment type="interaction">
    <interactant intactId="EBI-11984839">
        <id>Q96QF0-7</id>
    </interactant>
    <interactant intactId="EBI-11741890">
        <id>Q86VK4-3</id>
        <label>ZNF410</label>
    </interactant>
    <organismsDiffer>false</organismsDiffer>
    <experiments>3</experiments>
</comment>
<comment type="interaction">
    <interactant intactId="EBI-11984839">
        <id>Q96QF0-7</id>
    </interactant>
    <interactant intactId="EBI-7254550">
        <id>P36508</id>
        <label>ZNF76</label>
    </interactant>
    <organismsDiffer>false</organismsDiffer>
    <experiments>3</experiments>
</comment>
<comment type="subcellular location">
    <subcellularLocation>
        <location evidence="4 13">Cytoplasm</location>
    </subcellularLocation>
    <subcellularLocation>
        <location evidence="4">Nucleus</location>
    </subcellularLocation>
    <subcellularLocation>
        <location evidence="5">Cytoplasm</location>
        <location evidence="5">Cytoskeleton</location>
    </subcellularLocation>
    <subcellularLocation>
        <location>Cell projection</location>
        <location>Lamellipodium</location>
    </subcellularLocation>
    <subcellularLocation>
        <location evidence="13">Vesicle</location>
    </subcellularLocation>
    <subcellularLocation>
        <location evidence="13">Cytoplasm</location>
        <location evidence="13">Cytoskeleton</location>
        <location evidence="13">Microtubule organizing center</location>
        <location evidence="13">Centrosome</location>
    </subcellularLocation>
    <text evidence="4">Predominantly cytoplasmic but a small proportion colocalizes with SSX2 in the nucleus. Activation of protein kinase C results in redistribution to the periphery of lamellipodia.</text>
</comment>
<comment type="alternative products">
    <event type="alternative splicing"/>
    <isoform>
        <id>Q96QF0-1</id>
        <name evidence="4">2</name>
        <name evidence="14">alpha2</name>
        <sequence type="displayed"/>
    </isoform>
    <isoform>
        <id>Q96QF0-2</id>
        <name evidence="4">1</name>
        <name evidence="14">alpha1</name>
        <sequence type="described" ref="VSP_051755"/>
    </isoform>
    <isoform>
        <id>Q96QF0-3</id>
        <name evidence="4">3</name>
        <name evidence="14">beta1</name>
        <sequence type="described" ref="VSP_051755 VSP_051761 VSP_051762"/>
    </isoform>
    <isoform>
        <id>Q96QF0-4</id>
        <name evidence="4">4</name>
        <name evidence="14">beta2</name>
        <sequence type="described" ref="VSP_051761 VSP_051762"/>
    </isoform>
    <isoform>
        <id>Q96QF0-5</id>
        <name evidence="4">5</name>
        <name evidence="14">gamma1</name>
        <sequence type="described" ref="VSP_051755 VSP_051757 VSP_051759"/>
    </isoform>
    <isoform>
        <id>Q96QF0-6</id>
        <name evidence="4">6</name>
        <name evidence="14">gamma2</name>
        <sequence type="described" ref="VSP_051757 VSP_051759"/>
    </isoform>
    <isoform>
        <id>Q96QF0-7</id>
        <name evidence="18">7</name>
        <sequence type="described" ref="VSP_051755 VSP_051758 VSP_051760"/>
    </isoform>
    <isoform>
        <id>Q96QF0-8</id>
        <name evidence="18">8</name>
        <sequence type="described" ref="VSP_051756"/>
    </isoform>
</comment>
<comment type="tissue specificity">
    <text evidence="4 5">Expressed in brain, kidney, heart, pancreas and placenta. Not detected in skeletal muscle or liver.</text>
</comment>
<comment type="PTM">
    <text evidence="12">Phosphorylated by AKT1; the phosphorylation alters its GEF activity.</text>
</comment>
<comment type="similarity">
    <text evidence="2">Belongs to the SEC2 family.</text>
</comment>